<proteinExistence type="inferred from homology"/>
<evidence type="ECO:0000255" key="1">
    <source>
        <dbReference type="HAMAP-Rule" id="MF_00344"/>
    </source>
</evidence>
<organism>
    <name type="scientific">Wigglesworthia glossinidia brevipalpis</name>
    <dbReference type="NCBI Taxonomy" id="36870"/>
    <lineage>
        <taxon>Bacteria</taxon>
        <taxon>Pseudomonadati</taxon>
        <taxon>Pseudomonadota</taxon>
        <taxon>Gammaproteobacteria</taxon>
        <taxon>Enterobacterales</taxon>
        <taxon>Erwiniaceae</taxon>
        <taxon>Wigglesworthia</taxon>
    </lineage>
</organism>
<sequence>MNNQYILIIDFGSQYTKLVARRMKDIGAKFIISSWEIKKKELLKKNIKGILLSGSPMSVLDDKSPYVSKDILNMKVPILGICYGMHTLVKQLGGKVERKSVREFGYASIKILKNHSNLFYDNFEVSEKNYTKRQKVWMSHEDSVINIPKGFSIIASTKNCKYAAIFNKKNKFYGVQFHPEVTHSEKGYLILNRFVKNICNYTNVIKYSLSIRKIILKIKNKVNDEKVILGLSGGIDSFTSAILIHKAIGNNLFCICIDNGLLRNDEILKIKNLIKKVGKINVIYINHKKRFLKSLNGITDPEKKRKTIGNLFFKIFQEQADILKAKWLAQGTIYPDIIESSQNNLLKKDNFIKSHHNVCPLPKGIKLKILEPLKHLFKDEVKKIAKKIGIPKEIIFRHPFPGPGLAVRIIGEIKEEYCNILRMADEIFISELKSENLYFNISQAFSVLLPIKSVAVMGDMRKYEWVISLRAIETLDFMSANWANIPYKILNNVSNRIINEVRGISRVVYDISNKPPSTIEWE</sequence>
<keyword id="KW-0067">ATP-binding</keyword>
<keyword id="KW-0315">Glutamine amidotransferase</keyword>
<keyword id="KW-0332">GMP biosynthesis</keyword>
<keyword id="KW-0436">Ligase</keyword>
<keyword id="KW-0547">Nucleotide-binding</keyword>
<keyword id="KW-0658">Purine biosynthesis</keyword>
<keyword id="KW-1185">Reference proteome</keyword>
<accession>Q8D1V0</accession>
<feature type="chain" id="PRO_0000140207" description="GMP synthase [glutamine-hydrolyzing]">
    <location>
        <begin position="1"/>
        <end position="522"/>
    </location>
</feature>
<feature type="domain" description="Glutamine amidotransferase type-1" evidence="1">
    <location>
        <begin position="5"/>
        <end position="204"/>
    </location>
</feature>
<feature type="domain" description="GMPS ATP-PPase" evidence="1">
    <location>
        <begin position="205"/>
        <end position="397"/>
    </location>
</feature>
<feature type="active site" description="Nucleophile" evidence="1">
    <location>
        <position position="82"/>
    </location>
</feature>
<feature type="active site" evidence="1">
    <location>
        <position position="178"/>
    </location>
</feature>
<feature type="active site" evidence="1">
    <location>
        <position position="180"/>
    </location>
</feature>
<feature type="binding site" evidence="1">
    <location>
        <begin position="232"/>
        <end position="238"/>
    </location>
    <ligand>
        <name>ATP</name>
        <dbReference type="ChEBI" id="CHEBI:30616"/>
    </ligand>
</feature>
<reference key="1">
    <citation type="journal article" date="2002" name="Nat. Genet.">
        <title>Genome sequence of the endocellular obligate symbiont of tsetse flies, Wigglesworthia glossinidia.</title>
        <authorList>
            <person name="Akman L."/>
            <person name="Yamashita A."/>
            <person name="Watanabe H."/>
            <person name="Oshima K."/>
            <person name="Shiba T."/>
            <person name="Hattori M."/>
            <person name="Aksoy S."/>
        </authorList>
    </citation>
    <scope>NUCLEOTIDE SEQUENCE [LARGE SCALE GENOMIC DNA]</scope>
</reference>
<name>GUAA_WIGBR</name>
<gene>
    <name evidence="1" type="primary">guaA</name>
    <name type="ordered locus">WIGBR6060</name>
</gene>
<dbReference type="EC" id="6.3.5.2" evidence="1"/>
<dbReference type="EMBL" id="BA000021">
    <property type="protein sequence ID" value="BAC24752.1"/>
    <property type="molecule type" value="Genomic_DNA"/>
</dbReference>
<dbReference type="SMR" id="Q8D1V0"/>
<dbReference type="STRING" id="36870.gene:10369124"/>
<dbReference type="KEGG" id="wbr:guaA"/>
<dbReference type="eggNOG" id="COG0519">
    <property type="taxonomic scope" value="Bacteria"/>
</dbReference>
<dbReference type="HOGENOM" id="CLU_014340_0_5_6"/>
<dbReference type="OrthoDB" id="9802219at2"/>
<dbReference type="UniPathway" id="UPA00189">
    <property type="reaction ID" value="UER00296"/>
</dbReference>
<dbReference type="Proteomes" id="UP000000562">
    <property type="component" value="Chromosome"/>
</dbReference>
<dbReference type="GO" id="GO:0005829">
    <property type="term" value="C:cytosol"/>
    <property type="evidence" value="ECO:0007669"/>
    <property type="project" value="TreeGrafter"/>
</dbReference>
<dbReference type="GO" id="GO:0005524">
    <property type="term" value="F:ATP binding"/>
    <property type="evidence" value="ECO:0007669"/>
    <property type="project" value="UniProtKB-UniRule"/>
</dbReference>
<dbReference type="GO" id="GO:0003921">
    <property type="term" value="F:GMP synthase activity"/>
    <property type="evidence" value="ECO:0007669"/>
    <property type="project" value="InterPro"/>
</dbReference>
<dbReference type="CDD" id="cd01742">
    <property type="entry name" value="GATase1_GMP_Synthase"/>
    <property type="match status" value="1"/>
</dbReference>
<dbReference type="CDD" id="cd01997">
    <property type="entry name" value="GMP_synthase_C"/>
    <property type="match status" value="1"/>
</dbReference>
<dbReference type="FunFam" id="3.30.300.10:FF:000002">
    <property type="entry name" value="GMP synthase [glutamine-hydrolyzing]"/>
    <property type="match status" value="1"/>
</dbReference>
<dbReference type="FunFam" id="3.40.50.880:FF:000001">
    <property type="entry name" value="GMP synthase [glutamine-hydrolyzing]"/>
    <property type="match status" value="1"/>
</dbReference>
<dbReference type="Gene3D" id="3.30.300.10">
    <property type="match status" value="1"/>
</dbReference>
<dbReference type="Gene3D" id="3.40.50.880">
    <property type="match status" value="1"/>
</dbReference>
<dbReference type="Gene3D" id="3.40.50.620">
    <property type="entry name" value="HUPs"/>
    <property type="match status" value="1"/>
</dbReference>
<dbReference type="HAMAP" id="MF_00344">
    <property type="entry name" value="GMP_synthase"/>
    <property type="match status" value="1"/>
</dbReference>
<dbReference type="InterPro" id="IPR029062">
    <property type="entry name" value="Class_I_gatase-like"/>
</dbReference>
<dbReference type="InterPro" id="IPR017926">
    <property type="entry name" value="GATASE"/>
</dbReference>
<dbReference type="InterPro" id="IPR001674">
    <property type="entry name" value="GMP_synth_C"/>
</dbReference>
<dbReference type="InterPro" id="IPR004739">
    <property type="entry name" value="GMP_synth_GATase"/>
</dbReference>
<dbReference type="InterPro" id="IPR022955">
    <property type="entry name" value="GMP_synthase"/>
</dbReference>
<dbReference type="InterPro" id="IPR025777">
    <property type="entry name" value="GMPS_ATP_PPase_dom"/>
</dbReference>
<dbReference type="InterPro" id="IPR022310">
    <property type="entry name" value="NAD/GMP_synthase"/>
</dbReference>
<dbReference type="InterPro" id="IPR014729">
    <property type="entry name" value="Rossmann-like_a/b/a_fold"/>
</dbReference>
<dbReference type="NCBIfam" id="TIGR00884">
    <property type="entry name" value="guaA_Cterm"/>
    <property type="match status" value="1"/>
</dbReference>
<dbReference type="NCBIfam" id="TIGR00888">
    <property type="entry name" value="guaA_Nterm"/>
    <property type="match status" value="1"/>
</dbReference>
<dbReference type="NCBIfam" id="NF000848">
    <property type="entry name" value="PRK00074.1"/>
    <property type="match status" value="1"/>
</dbReference>
<dbReference type="PANTHER" id="PTHR11922:SF2">
    <property type="entry name" value="GMP SYNTHASE [GLUTAMINE-HYDROLYZING]"/>
    <property type="match status" value="1"/>
</dbReference>
<dbReference type="PANTHER" id="PTHR11922">
    <property type="entry name" value="GMP SYNTHASE-RELATED"/>
    <property type="match status" value="1"/>
</dbReference>
<dbReference type="Pfam" id="PF00117">
    <property type="entry name" value="GATase"/>
    <property type="match status" value="1"/>
</dbReference>
<dbReference type="Pfam" id="PF00958">
    <property type="entry name" value="GMP_synt_C"/>
    <property type="match status" value="1"/>
</dbReference>
<dbReference type="Pfam" id="PF02540">
    <property type="entry name" value="NAD_synthase"/>
    <property type="match status" value="1"/>
</dbReference>
<dbReference type="PRINTS" id="PR00096">
    <property type="entry name" value="GATASE"/>
</dbReference>
<dbReference type="SUPFAM" id="SSF52402">
    <property type="entry name" value="Adenine nucleotide alpha hydrolases-like"/>
    <property type="match status" value="1"/>
</dbReference>
<dbReference type="SUPFAM" id="SSF52317">
    <property type="entry name" value="Class I glutamine amidotransferase-like"/>
    <property type="match status" value="1"/>
</dbReference>
<dbReference type="SUPFAM" id="SSF54810">
    <property type="entry name" value="GMP synthetase C-terminal dimerisation domain"/>
    <property type="match status" value="1"/>
</dbReference>
<dbReference type="PROSITE" id="PS51273">
    <property type="entry name" value="GATASE_TYPE_1"/>
    <property type="match status" value="1"/>
</dbReference>
<dbReference type="PROSITE" id="PS51553">
    <property type="entry name" value="GMPS_ATP_PPASE"/>
    <property type="match status" value="1"/>
</dbReference>
<protein>
    <recommendedName>
        <fullName evidence="1">GMP synthase [glutamine-hydrolyzing]</fullName>
        <ecNumber evidence="1">6.3.5.2</ecNumber>
    </recommendedName>
    <alternativeName>
        <fullName evidence="1">GMP synthetase</fullName>
    </alternativeName>
    <alternativeName>
        <fullName evidence="1">Glutamine amidotransferase</fullName>
    </alternativeName>
</protein>
<comment type="function">
    <text evidence="1">Catalyzes the synthesis of GMP from XMP.</text>
</comment>
<comment type="catalytic activity">
    <reaction evidence="1">
        <text>XMP + L-glutamine + ATP + H2O = GMP + L-glutamate + AMP + diphosphate + 2 H(+)</text>
        <dbReference type="Rhea" id="RHEA:11680"/>
        <dbReference type="ChEBI" id="CHEBI:15377"/>
        <dbReference type="ChEBI" id="CHEBI:15378"/>
        <dbReference type="ChEBI" id="CHEBI:29985"/>
        <dbReference type="ChEBI" id="CHEBI:30616"/>
        <dbReference type="ChEBI" id="CHEBI:33019"/>
        <dbReference type="ChEBI" id="CHEBI:57464"/>
        <dbReference type="ChEBI" id="CHEBI:58115"/>
        <dbReference type="ChEBI" id="CHEBI:58359"/>
        <dbReference type="ChEBI" id="CHEBI:456215"/>
        <dbReference type="EC" id="6.3.5.2"/>
    </reaction>
</comment>
<comment type="pathway">
    <text evidence="1">Purine metabolism; GMP biosynthesis; GMP from XMP (L-Gln route): step 1/1.</text>
</comment>
<comment type="subunit">
    <text evidence="1">Homodimer.</text>
</comment>